<name>RL32_TROW8</name>
<feature type="chain" id="PRO_0000172430" description="Large ribosomal subunit protein bL32">
    <location>
        <begin position="1"/>
        <end position="65"/>
    </location>
</feature>
<accession>Q83I83</accession>
<evidence type="ECO:0000255" key="1">
    <source>
        <dbReference type="HAMAP-Rule" id="MF_00340"/>
    </source>
</evidence>
<evidence type="ECO:0000305" key="2"/>
<proteinExistence type="inferred from homology"/>
<gene>
    <name evidence="1" type="primary">rpmF</name>
    <name type="ordered locus">TW198</name>
</gene>
<reference key="1">
    <citation type="journal article" date="2003" name="Lancet">
        <title>Sequencing and analysis of the genome of the Whipple's disease bacterium Tropheryma whipplei.</title>
        <authorList>
            <person name="Bentley S.D."/>
            <person name="Maiwald M."/>
            <person name="Murphy L.D."/>
            <person name="Pallen M.J."/>
            <person name="Yeats C.A."/>
            <person name="Dover L.G."/>
            <person name="Norbertczak H.T."/>
            <person name="Besra G.S."/>
            <person name="Quail M.A."/>
            <person name="Harris D.E."/>
            <person name="von Herbay A."/>
            <person name="Goble A."/>
            <person name="Rutter S."/>
            <person name="Squares R."/>
            <person name="Squares S."/>
            <person name="Barrell B.G."/>
            <person name="Parkhill J."/>
            <person name="Relman D.A."/>
        </authorList>
    </citation>
    <scope>NUCLEOTIDE SEQUENCE [LARGE SCALE GENOMIC DNA]</scope>
    <source>
        <strain>TW08/27</strain>
    </source>
</reference>
<protein>
    <recommendedName>
        <fullName evidence="1">Large ribosomal subunit protein bL32</fullName>
    </recommendedName>
    <alternativeName>
        <fullName evidence="2">50S ribosomal protein L32</fullName>
    </alternativeName>
</protein>
<keyword id="KW-0687">Ribonucleoprotein</keyword>
<keyword id="KW-0689">Ribosomal protein</keyword>
<dbReference type="EMBL" id="BX251410">
    <property type="protein sequence ID" value="CAD66875.1"/>
    <property type="molecule type" value="Genomic_DNA"/>
</dbReference>
<dbReference type="RefSeq" id="WP_011096156.1">
    <property type="nucleotide sequence ID" value="NC_004551.1"/>
</dbReference>
<dbReference type="GeneID" id="67387974"/>
<dbReference type="KEGG" id="tws:TW198"/>
<dbReference type="HOGENOM" id="CLU_2805252_0_0_11"/>
<dbReference type="GO" id="GO:0015934">
    <property type="term" value="C:large ribosomal subunit"/>
    <property type="evidence" value="ECO:0007669"/>
    <property type="project" value="InterPro"/>
</dbReference>
<dbReference type="GO" id="GO:0003735">
    <property type="term" value="F:structural constituent of ribosome"/>
    <property type="evidence" value="ECO:0007669"/>
    <property type="project" value="InterPro"/>
</dbReference>
<dbReference type="GO" id="GO:0006412">
    <property type="term" value="P:translation"/>
    <property type="evidence" value="ECO:0007669"/>
    <property type="project" value="UniProtKB-UniRule"/>
</dbReference>
<dbReference type="HAMAP" id="MF_00340">
    <property type="entry name" value="Ribosomal_bL32"/>
    <property type="match status" value="1"/>
</dbReference>
<dbReference type="InterPro" id="IPR002677">
    <property type="entry name" value="Ribosomal_bL32"/>
</dbReference>
<dbReference type="InterPro" id="IPR011332">
    <property type="entry name" value="Ribosomal_zn-bd"/>
</dbReference>
<dbReference type="NCBIfam" id="TIGR01031">
    <property type="entry name" value="rpmF_bact"/>
    <property type="match status" value="1"/>
</dbReference>
<dbReference type="Pfam" id="PF01783">
    <property type="entry name" value="Ribosomal_L32p"/>
    <property type="match status" value="1"/>
</dbReference>
<dbReference type="SUPFAM" id="SSF57829">
    <property type="entry name" value="Zn-binding ribosomal proteins"/>
    <property type="match status" value="1"/>
</dbReference>
<comment type="similarity">
    <text evidence="1">Belongs to the bacterial ribosomal protein bL32 family.</text>
</comment>
<organism>
    <name type="scientific">Tropheryma whipplei (strain TW08/27)</name>
    <name type="common">Whipple's bacillus</name>
    <dbReference type="NCBI Taxonomy" id="218496"/>
    <lineage>
        <taxon>Bacteria</taxon>
        <taxon>Bacillati</taxon>
        <taxon>Actinomycetota</taxon>
        <taxon>Actinomycetes</taxon>
        <taxon>Micrococcales</taxon>
        <taxon>Tropherymataceae</taxon>
        <taxon>Tropheryma</taxon>
    </lineage>
</organism>
<sequence>MAVPKRKKSRANTRARRSQWKASVPGFARLEERGRPVFYLPHRARRILDSNGNELFMEYKGRRVG</sequence>